<dbReference type="EC" id="3.6.-.-" evidence="1"/>
<dbReference type="EMBL" id="CP000425">
    <property type="protein sequence ID" value="ABJ73975.1"/>
    <property type="molecule type" value="Genomic_DNA"/>
</dbReference>
<dbReference type="RefSeq" id="WP_011677283.1">
    <property type="nucleotide sequence ID" value="NC_008527.1"/>
</dbReference>
<dbReference type="SMR" id="Q02VP7"/>
<dbReference type="KEGG" id="llc:LACR_2547"/>
<dbReference type="HOGENOM" id="CLU_019624_4_1_9"/>
<dbReference type="Proteomes" id="UP000000240">
    <property type="component" value="Chromosome"/>
</dbReference>
<dbReference type="GO" id="GO:0005829">
    <property type="term" value="C:cytosol"/>
    <property type="evidence" value="ECO:0007669"/>
    <property type="project" value="TreeGrafter"/>
</dbReference>
<dbReference type="GO" id="GO:0005525">
    <property type="term" value="F:GTP binding"/>
    <property type="evidence" value="ECO:0007669"/>
    <property type="project" value="UniProtKB-UniRule"/>
</dbReference>
<dbReference type="GO" id="GO:0003924">
    <property type="term" value="F:GTPase activity"/>
    <property type="evidence" value="ECO:0007669"/>
    <property type="project" value="UniProtKB-UniRule"/>
</dbReference>
<dbReference type="GO" id="GO:0046872">
    <property type="term" value="F:metal ion binding"/>
    <property type="evidence" value="ECO:0007669"/>
    <property type="project" value="UniProtKB-KW"/>
</dbReference>
<dbReference type="GO" id="GO:0030488">
    <property type="term" value="P:tRNA methylation"/>
    <property type="evidence" value="ECO:0007669"/>
    <property type="project" value="TreeGrafter"/>
</dbReference>
<dbReference type="GO" id="GO:0002098">
    <property type="term" value="P:tRNA wobble uridine modification"/>
    <property type="evidence" value="ECO:0007669"/>
    <property type="project" value="TreeGrafter"/>
</dbReference>
<dbReference type="CDD" id="cd04164">
    <property type="entry name" value="trmE"/>
    <property type="match status" value="1"/>
</dbReference>
<dbReference type="CDD" id="cd14858">
    <property type="entry name" value="TrmE_N"/>
    <property type="match status" value="1"/>
</dbReference>
<dbReference type="FunFam" id="3.30.1360.120:FF:000003">
    <property type="entry name" value="tRNA modification GTPase MnmE"/>
    <property type="match status" value="1"/>
</dbReference>
<dbReference type="FunFam" id="3.40.50.300:FF:000494">
    <property type="entry name" value="tRNA modification GTPase MnmE"/>
    <property type="match status" value="1"/>
</dbReference>
<dbReference type="Gene3D" id="3.40.50.300">
    <property type="entry name" value="P-loop containing nucleotide triphosphate hydrolases"/>
    <property type="match status" value="1"/>
</dbReference>
<dbReference type="Gene3D" id="3.30.1360.120">
    <property type="entry name" value="Probable tRNA modification gtpase trme, domain 1"/>
    <property type="match status" value="1"/>
</dbReference>
<dbReference type="Gene3D" id="1.20.120.430">
    <property type="entry name" value="tRNA modification GTPase MnmE domain 2"/>
    <property type="match status" value="1"/>
</dbReference>
<dbReference type="HAMAP" id="MF_00379">
    <property type="entry name" value="GTPase_MnmE"/>
    <property type="match status" value="1"/>
</dbReference>
<dbReference type="InterPro" id="IPR031168">
    <property type="entry name" value="G_TrmE"/>
</dbReference>
<dbReference type="InterPro" id="IPR006073">
    <property type="entry name" value="GTP-bd"/>
</dbReference>
<dbReference type="InterPro" id="IPR018948">
    <property type="entry name" value="GTP-bd_TrmE_N"/>
</dbReference>
<dbReference type="InterPro" id="IPR004520">
    <property type="entry name" value="GTPase_MnmE"/>
</dbReference>
<dbReference type="InterPro" id="IPR027368">
    <property type="entry name" value="MnmE_dom2"/>
</dbReference>
<dbReference type="InterPro" id="IPR025867">
    <property type="entry name" value="MnmE_helical"/>
</dbReference>
<dbReference type="InterPro" id="IPR027417">
    <property type="entry name" value="P-loop_NTPase"/>
</dbReference>
<dbReference type="InterPro" id="IPR005225">
    <property type="entry name" value="Small_GTP-bd"/>
</dbReference>
<dbReference type="InterPro" id="IPR027266">
    <property type="entry name" value="TrmE/GcvT_dom1"/>
</dbReference>
<dbReference type="NCBIfam" id="TIGR00450">
    <property type="entry name" value="mnmE_trmE_thdF"/>
    <property type="match status" value="1"/>
</dbReference>
<dbReference type="NCBIfam" id="NF003661">
    <property type="entry name" value="PRK05291.1-3"/>
    <property type="match status" value="1"/>
</dbReference>
<dbReference type="NCBIfam" id="TIGR00231">
    <property type="entry name" value="small_GTP"/>
    <property type="match status" value="1"/>
</dbReference>
<dbReference type="PANTHER" id="PTHR42714">
    <property type="entry name" value="TRNA MODIFICATION GTPASE GTPBP3"/>
    <property type="match status" value="1"/>
</dbReference>
<dbReference type="PANTHER" id="PTHR42714:SF2">
    <property type="entry name" value="TRNA MODIFICATION GTPASE GTPBP3, MITOCHONDRIAL"/>
    <property type="match status" value="1"/>
</dbReference>
<dbReference type="Pfam" id="PF01926">
    <property type="entry name" value="MMR_HSR1"/>
    <property type="match status" value="1"/>
</dbReference>
<dbReference type="Pfam" id="PF12631">
    <property type="entry name" value="MnmE_helical"/>
    <property type="match status" value="1"/>
</dbReference>
<dbReference type="Pfam" id="PF10396">
    <property type="entry name" value="TrmE_N"/>
    <property type="match status" value="1"/>
</dbReference>
<dbReference type="SUPFAM" id="SSF52540">
    <property type="entry name" value="P-loop containing nucleoside triphosphate hydrolases"/>
    <property type="match status" value="1"/>
</dbReference>
<dbReference type="SUPFAM" id="SSF116878">
    <property type="entry name" value="TrmE connector domain"/>
    <property type="match status" value="1"/>
</dbReference>
<dbReference type="PROSITE" id="PS51709">
    <property type="entry name" value="G_TRME"/>
    <property type="match status" value="1"/>
</dbReference>
<sequence>MTLTQEFDTIAAISTPLGEGAIAIVRLSGTDALKIAQSVYKGKNLAQVASHTINYGHIFEEERLVDEVMVSVMRAPKTFTREDIVEINTHGGIAVTQEILQLLLRNGARLAEPGEFTKRAFLNGRIDLAQAESVMDLIRAKTDKAANIAVKQLDGSLSKMINNIRQDILESLAQVEVNIDYPEYDDVETMTSQMLLEKTAHFEQLLENLLSTAKRGKILREGLKTAIIGRPNVGKSSLLNQLLREEKAIVTDIAGTTRDVITEFANIGGVPLELVDTAGIRETDDLVEAIGVERSKKALAEADLVLLVLDASLELTDKDLELLELSKNANRIVLLNKTDLPEKLDINQISGDFIRISALKNENLSAVEEKINQIFFAGEIEAKDATVLSNARHISLVEEALKALKEANNGLALGLPVDLIQVDVTRCWQLLGEITGEAAPDELITQLFSQFCLGK</sequence>
<comment type="function">
    <text evidence="1">Exhibits a very high intrinsic GTPase hydrolysis rate. Involved in the addition of a carboxymethylaminomethyl (cmnm) group at the wobble position (U34) of certain tRNAs, forming tRNA-cmnm(5)s(2)U34.</text>
</comment>
<comment type="cofactor">
    <cofactor evidence="1">
        <name>K(+)</name>
        <dbReference type="ChEBI" id="CHEBI:29103"/>
    </cofactor>
    <text evidence="1">Binds 1 potassium ion per subunit.</text>
</comment>
<comment type="subunit">
    <text evidence="1">Homodimer. Heterotetramer of two MnmE and two MnmG subunits.</text>
</comment>
<comment type="subcellular location">
    <subcellularLocation>
        <location evidence="1">Cytoplasm</location>
    </subcellularLocation>
</comment>
<comment type="similarity">
    <text evidence="1">Belongs to the TRAFAC class TrmE-Era-EngA-EngB-Septin-like GTPase superfamily. TrmE GTPase family.</text>
</comment>
<organism>
    <name type="scientific">Lactococcus lactis subsp. cremoris (strain SK11)</name>
    <dbReference type="NCBI Taxonomy" id="272622"/>
    <lineage>
        <taxon>Bacteria</taxon>
        <taxon>Bacillati</taxon>
        <taxon>Bacillota</taxon>
        <taxon>Bacilli</taxon>
        <taxon>Lactobacillales</taxon>
        <taxon>Streptococcaceae</taxon>
        <taxon>Lactococcus</taxon>
        <taxon>Lactococcus cremoris subsp. cremoris</taxon>
    </lineage>
</organism>
<protein>
    <recommendedName>
        <fullName evidence="1">tRNA modification GTPase MnmE</fullName>
        <ecNumber evidence="1">3.6.-.-</ecNumber>
    </recommendedName>
</protein>
<proteinExistence type="inferred from homology"/>
<evidence type="ECO:0000255" key="1">
    <source>
        <dbReference type="HAMAP-Rule" id="MF_00379"/>
    </source>
</evidence>
<accession>Q02VP7</accession>
<keyword id="KW-0963">Cytoplasm</keyword>
<keyword id="KW-0342">GTP-binding</keyword>
<keyword id="KW-0378">Hydrolase</keyword>
<keyword id="KW-0460">Magnesium</keyword>
<keyword id="KW-0479">Metal-binding</keyword>
<keyword id="KW-0547">Nucleotide-binding</keyword>
<keyword id="KW-0630">Potassium</keyword>
<keyword id="KW-0819">tRNA processing</keyword>
<gene>
    <name evidence="1" type="primary">mnmE</name>
    <name evidence="1" type="synonym">trmE</name>
    <name type="ordered locus">LACR_2547</name>
</gene>
<feature type="chain" id="PRO_0000345814" description="tRNA modification GTPase MnmE">
    <location>
        <begin position="1"/>
        <end position="455"/>
    </location>
</feature>
<feature type="domain" description="TrmE-type G">
    <location>
        <begin position="222"/>
        <end position="376"/>
    </location>
</feature>
<feature type="binding site" evidence="1">
    <location>
        <position position="26"/>
    </location>
    <ligand>
        <name>(6S)-5-formyl-5,6,7,8-tetrahydrofolate</name>
        <dbReference type="ChEBI" id="CHEBI:57457"/>
    </ligand>
</feature>
<feature type="binding site" evidence="1">
    <location>
        <position position="86"/>
    </location>
    <ligand>
        <name>(6S)-5-formyl-5,6,7,8-tetrahydrofolate</name>
        <dbReference type="ChEBI" id="CHEBI:57457"/>
    </ligand>
</feature>
<feature type="binding site" evidence="1">
    <location>
        <position position="125"/>
    </location>
    <ligand>
        <name>(6S)-5-formyl-5,6,7,8-tetrahydrofolate</name>
        <dbReference type="ChEBI" id="CHEBI:57457"/>
    </ligand>
</feature>
<feature type="binding site" evidence="1">
    <location>
        <begin position="232"/>
        <end position="237"/>
    </location>
    <ligand>
        <name>GTP</name>
        <dbReference type="ChEBI" id="CHEBI:37565"/>
    </ligand>
</feature>
<feature type="binding site" evidence="1">
    <location>
        <position position="232"/>
    </location>
    <ligand>
        <name>K(+)</name>
        <dbReference type="ChEBI" id="CHEBI:29103"/>
    </ligand>
</feature>
<feature type="binding site" evidence="1">
    <location>
        <position position="236"/>
    </location>
    <ligand>
        <name>Mg(2+)</name>
        <dbReference type="ChEBI" id="CHEBI:18420"/>
    </ligand>
</feature>
<feature type="binding site" evidence="1">
    <location>
        <begin position="251"/>
        <end position="257"/>
    </location>
    <ligand>
        <name>GTP</name>
        <dbReference type="ChEBI" id="CHEBI:37565"/>
    </ligand>
</feature>
<feature type="binding site" evidence="1">
    <location>
        <position position="251"/>
    </location>
    <ligand>
        <name>K(+)</name>
        <dbReference type="ChEBI" id="CHEBI:29103"/>
    </ligand>
</feature>
<feature type="binding site" evidence="1">
    <location>
        <position position="253"/>
    </location>
    <ligand>
        <name>K(+)</name>
        <dbReference type="ChEBI" id="CHEBI:29103"/>
    </ligand>
</feature>
<feature type="binding site" evidence="1">
    <location>
        <position position="256"/>
    </location>
    <ligand>
        <name>K(+)</name>
        <dbReference type="ChEBI" id="CHEBI:29103"/>
    </ligand>
</feature>
<feature type="binding site" evidence="1">
    <location>
        <position position="257"/>
    </location>
    <ligand>
        <name>Mg(2+)</name>
        <dbReference type="ChEBI" id="CHEBI:18420"/>
    </ligand>
</feature>
<feature type="binding site" evidence="1">
    <location>
        <begin position="276"/>
        <end position="279"/>
    </location>
    <ligand>
        <name>GTP</name>
        <dbReference type="ChEBI" id="CHEBI:37565"/>
    </ligand>
</feature>
<feature type="binding site" evidence="1">
    <location>
        <position position="455"/>
    </location>
    <ligand>
        <name>(6S)-5-formyl-5,6,7,8-tetrahydrofolate</name>
        <dbReference type="ChEBI" id="CHEBI:57457"/>
    </ligand>
</feature>
<name>MNME_LACLS</name>
<reference key="1">
    <citation type="journal article" date="2006" name="Proc. Natl. Acad. Sci. U.S.A.">
        <title>Comparative genomics of the lactic acid bacteria.</title>
        <authorList>
            <person name="Makarova K.S."/>
            <person name="Slesarev A."/>
            <person name="Wolf Y.I."/>
            <person name="Sorokin A."/>
            <person name="Mirkin B."/>
            <person name="Koonin E.V."/>
            <person name="Pavlov A."/>
            <person name="Pavlova N."/>
            <person name="Karamychev V."/>
            <person name="Polouchine N."/>
            <person name="Shakhova V."/>
            <person name="Grigoriev I."/>
            <person name="Lou Y."/>
            <person name="Rohksar D."/>
            <person name="Lucas S."/>
            <person name="Huang K."/>
            <person name="Goodstein D.M."/>
            <person name="Hawkins T."/>
            <person name="Plengvidhya V."/>
            <person name="Welker D."/>
            <person name="Hughes J."/>
            <person name="Goh Y."/>
            <person name="Benson A."/>
            <person name="Baldwin K."/>
            <person name="Lee J.-H."/>
            <person name="Diaz-Muniz I."/>
            <person name="Dosti B."/>
            <person name="Smeianov V."/>
            <person name="Wechter W."/>
            <person name="Barabote R."/>
            <person name="Lorca G."/>
            <person name="Altermann E."/>
            <person name="Barrangou R."/>
            <person name="Ganesan B."/>
            <person name="Xie Y."/>
            <person name="Rawsthorne H."/>
            <person name="Tamir D."/>
            <person name="Parker C."/>
            <person name="Breidt F."/>
            <person name="Broadbent J.R."/>
            <person name="Hutkins R."/>
            <person name="O'Sullivan D."/>
            <person name="Steele J."/>
            <person name="Unlu G."/>
            <person name="Saier M.H. Jr."/>
            <person name="Klaenhammer T."/>
            <person name="Richardson P."/>
            <person name="Kozyavkin S."/>
            <person name="Weimer B.C."/>
            <person name="Mills D.A."/>
        </authorList>
    </citation>
    <scope>NUCLEOTIDE SEQUENCE [LARGE SCALE GENOMIC DNA]</scope>
    <source>
        <strain>SK11</strain>
    </source>
</reference>